<organism>
    <name type="scientific">Finegoldia magna (strain ATCC 29328 / DSM 20472 / WAL 2508)</name>
    <name type="common">Peptostreptococcus magnus</name>
    <dbReference type="NCBI Taxonomy" id="334413"/>
    <lineage>
        <taxon>Bacteria</taxon>
        <taxon>Bacillati</taxon>
        <taxon>Bacillota</taxon>
        <taxon>Tissierellia</taxon>
        <taxon>Tissierellales</taxon>
        <taxon>Peptoniphilaceae</taxon>
        <taxon>Finegoldia</taxon>
    </lineage>
</organism>
<dbReference type="EMBL" id="AP008971">
    <property type="protein sequence ID" value="BAG07602.1"/>
    <property type="molecule type" value="Genomic_DNA"/>
</dbReference>
<dbReference type="RefSeq" id="WP_002837359.1">
    <property type="nucleotide sequence ID" value="NC_010376.1"/>
</dbReference>
<dbReference type="SMR" id="B0RZT8"/>
<dbReference type="STRING" id="334413.FMG_0184"/>
<dbReference type="KEGG" id="fma:FMG_0184"/>
<dbReference type="eggNOG" id="COG0522">
    <property type="taxonomic scope" value="Bacteria"/>
</dbReference>
<dbReference type="HOGENOM" id="CLU_092403_0_1_9"/>
<dbReference type="Proteomes" id="UP000001319">
    <property type="component" value="Chromosome"/>
</dbReference>
<dbReference type="GO" id="GO:0015935">
    <property type="term" value="C:small ribosomal subunit"/>
    <property type="evidence" value="ECO:0007669"/>
    <property type="project" value="InterPro"/>
</dbReference>
<dbReference type="GO" id="GO:0019843">
    <property type="term" value="F:rRNA binding"/>
    <property type="evidence" value="ECO:0007669"/>
    <property type="project" value="UniProtKB-UniRule"/>
</dbReference>
<dbReference type="GO" id="GO:0003735">
    <property type="term" value="F:structural constituent of ribosome"/>
    <property type="evidence" value="ECO:0007669"/>
    <property type="project" value="InterPro"/>
</dbReference>
<dbReference type="GO" id="GO:0042274">
    <property type="term" value="P:ribosomal small subunit biogenesis"/>
    <property type="evidence" value="ECO:0007669"/>
    <property type="project" value="TreeGrafter"/>
</dbReference>
<dbReference type="GO" id="GO:0006412">
    <property type="term" value="P:translation"/>
    <property type="evidence" value="ECO:0007669"/>
    <property type="project" value="UniProtKB-UniRule"/>
</dbReference>
<dbReference type="CDD" id="cd00165">
    <property type="entry name" value="S4"/>
    <property type="match status" value="1"/>
</dbReference>
<dbReference type="FunFam" id="3.10.290.10:FF:000001">
    <property type="entry name" value="30S ribosomal protein S4"/>
    <property type="match status" value="1"/>
</dbReference>
<dbReference type="Gene3D" id="1.10.1050.10">
    <property type="entry name" value="Ribosomal Protein S4 Delta 41, Chain A, domain 1"/>
    <property type="match status" value="1"/>
</dbReference>
<dbReference type="Gene3D" id="3.10.290.10">
    <property type="entry name" value="RNA-binding S4 domain"/>
    <property type="match status" value="1"/>
</dbReference>
<dbReference type="HAMAP" id="MF_01306_B">
    <property type="entry name" value="Ribosomal_uS4_B"/>
    <property type="match status" value="1"/>
</dbReference>
<dbReference type="InterPro" id="IPR022801">
    <property type="entry name" value="Ribosomal_uS4"/>
</dbReference>
<dbReference type="InterPro" id="IPR005709">
    <property type="entry name" value="Ribosomal_uS4_bac-type"/>
</dbReference>
<dbReference type="InterPro" id="IPR018079">
    <property type="entry name" value="Ribosomal_uS4_CS"/>
</dbReference>
<dbReference type="InterPro" id="IPR001912">
    <property type="entry name" value="Ribosomal_uS4_N"/>
</dbReference>
<dbReference type="InterPro" id="IPR002942">
    <property type="entry name" value="S4_RNA-bd"/>
</dbReference>
<dbReference type="InterPro" id="IPR036986">
    <property type="entry name" value="S4_RNA-bd_sf"/>
</dbReference>
<dbReference type="NCBIfam" id="NF003717">
    <property type="entry name" value="PRK05327.1"/>
    <property type="match status" value="1"/>
</dbReference>
<dbReference type="NCBIfam" id="TIGR01017">
    <property type="entry name" value="rpsD_bact"/>
    <property type="match status" value="1"/>
</dbReference>
<dbReference type="PANTHER" id="PTHR11831">
    <property type="entry name" value="30S 40S RIBOSOMAL PROTEIN"/>
    <property type="match status" value="1"/>
</dbReference>
<dbReference type="PANTHER" id="PTHR11831:SF4">
    <property type="entry name" value="SMALL RIBOSOMAL SUBUNIT PROTEIN US4M"/>
    <property type="match status" value="1"/>
</dbReference>
<dbReference type="Pfam" id="PF00163">
    <property type="entry name" value="Ribosomal_S4"/>
    <property type="match status" value="1"/>
</dbReference>
<dbReference type="Pfam" id="PF01479">
    <property type="entry name" value="S4"/>
    <property type="match status" value="1"/>
</dbReference>
<dbReference type="SMART" id="SM01390">
    <property type="entry name" value="Ribosomal_S4"/>
    <property type="match status" value="1"/>
</dbReference>
<dbReference type="SMART" id="SM00363">
    <property type="entry name" value="S4"/>
    <property type="match status" value="1"/>
</dbReference>
<dbReference type="SUPFAM" id="SSF55174">
    <property type="entry name" value="Alpha-L RNA-binding motif"/>
    <property type="match status" value="1"/>
</dbReference>
<dbReference type="PROSITE" id="PS00632">
    <property type="entry name" value="RIBOSOMAL_S4"/>
    <property type="match status" value="1"/>
</dbReference>
<dbReference type="PROSITE" id="PS50889">
    <property type="entry name" value="S4"/>
    <property type="match status" value="1"/>
</dbReference>
<proteinExistence type="inferred from homology"/>
<comment type="function">
    <text evidence="1">One of the primary rRNA binding proteins, it binds directly to 16S rRNA where it nucleates assembly of the body of the 30S subunit.</text>
</comment>
<comment type="function">
    <text evidence="1">With S5 and S12 plays an important role in translational accuracy.</text>
</comment>
<comment type="subunit">
    <text evidence="1">Part of the 30S ribosomal subunit. Contacts protein S5. The interaction surface between S4 and S5 is involved in control of translational fidelity.</text>
</comment>
<comment type="similarity">
    <text evidence="1">Belongs to the universal ribosomal protein uS4 family.</text>
</comment>
<gene>
    <name evidence="1" type="primary">rpsD</name>
    <name type="ordered locus">FMG_0184</name>
</gene>
<accession>B0RZT8</accession>
<evidence type="ECO:0000255" key="1">
    <source>
        <dbReference type="HAMAP-Rule" id="MF_01306"/>
    </source>
</evidence>
<evidence type="ECO:0000305" key="2"/>
<feature type="chain" id="PRO_1000140736" description="Small ribosomal subunit protein uS4">
    <location>
        <begin position="1"/>
        <end position="198"/>
    </location>
</feature>
<feature type="domain" description="S4 RNA-binding" evidence="1">
    <location>
        <begin position="90"/>
        <end position="152"/>
    </location>
</feature>
<protein>
    <recommendedName>
        <fullName evidence="1">Small ribosomal subunit protein uS4</fullName>
    </recommendedName>
    <alternativeName>
        <fullName evidence="2">30S ribosomal protein S4</fullName>
    </alternativeName>
</protein>
<name>RS4_FINM2</name>
<sequence length="198" mass="22940">MARMMGPRFKQSRRLGLNVCGHPKANKRMGKGLGRNDKKLTEYGMQLLEKQRLRAYYGVNEKQMHKYFEKALNNKEGLTTGDVMVRQLETRLDNLVLRASFASSIRQARQMVSHGLIRVNGKKVDIPSFQVAEGSVIELKEKSRSNELFKENYETNFAQSLPYIDKEENFKVTLTRLPERQEIPIEITDSLIVELYSR</sequence>
<keyword id="KW-1185">Reference proteome</keyword>
<keyword id="KW-0687">Ribonucleoprotein</keyword>
<keyword id="KW-0689">Ribosomal protein</keyword>
<keyword id="KW-0694">RNA-binding</keyword>
<keyword id="KW-0699">rRNA-binding</keyword>
<reference key="1">
    <citation type="journal article" date="2008" name="DNA Res.">
        <title>Complete genome sequence of Finegoldia magna, an anaerobic opportunistic pathogen.</title>
        <authorList>
            <person name="Goto T."/>
            <person name="Yamashita A."/>
            <person name="Hirakawa H."/>
            <person name="Matsutani M."/>
            <person name="Todo K."/>
            <person name="Ohshima K."/>
            <person name="Toh H."/>
            <person name="Miyamoto K."/>
            <person name="Kuhara S."/>
            <person name="Hattori M."/>
            <person name="Shimizu T."/>
            <person name="Akimoto S."/>
        </authorList>
    </citation>
    <scope>NUCLEOTIDE SEQUENCE [LARGE SCALE GENOMIC DNA]</scope>
    <source>
        <strain>ATCC 29328 / DSM 20472 / WAL 2508</strain>
    </source>
</reference>